<dbReference type="EMBL" id="BA000001">
    <property type="protein sequence ID" value="BAA30202.1"/>
    <property type="molecule type" value="Genomic_DNA"/>
</dbReference>
<dbReference type="PIR" id="H71050">
    <property type="entry name" value="H71050"/>
</dbReference>
<dbReference type="RefSeq" id="WP_010885186.1">
    <property type="nucleotide sequence ID" value="NC_000961.1"/>
</dbReference>
<dbReference type="SMR" id="O58830"/>
<dbReference type="STRING" id="70601.gene:9378062"/>
<dbReference type="EnsemblBacteria" id="BAA30202">
    <property type="protein sequence ID" value="BAA30202"/>
    <property type="gene ID" value="BAA30202"/>
</dbReference>
<dbReference type="GeneID" id="1443421"/>
<dbReference type="KEGG" id="pho:PH1103"/>
<dbReference type="eggNOG" id="arCOG04154">
    <property type="taxonomic scope" value="Archaea"/>
</dbReference>
<dbReference type="OrthoDB" id="372305at2157"/>
<dbReference type="Proteomes" id="UP000000752">
    <property type="component" value="Chromosome"/>
</dbReference>
<dbReference type="GO" id="GO:1990904">
    <property type="term" value="C:ribonucleoprotein complex"/>
    <property type="evidence" value="ECO:0007669"/>
    <property type="project" value="UniProtKB-KW"/>
</dbReference>
<dbReference type="GO" id="GO:0005840">
    <property type="term" value="C:ribosome"/>
    <property type="evidence" value="ECO:0007669"/>
    <property type="project" value="UniProtKB-KW"/>
</dbReference>
<dbReference type="GO" id="GO:0003735">
    <property type="term" value="F:structural constituent of ribosome"/>
    <property type="evidence" value="ECO:0007669"/>
    <property type="project" value="InterPro"/>
</dbReference>
<dbReference type="GO" id="GO:0006412">
    <property type="term" value="P:translation"/>
    <property type="evidence" value="ECO:0007669"/>
    <property type="project" value="UniProtKB-UniRule"/>
</dbReference>
<dbReference type="CDD" id="cd11382">
    <property type="entry name" value="Ribosomal_S8e"/>
    <property type="match status" value="1"/>
</dbReference>
<dbReference type="FunFam" id="2.40.10.310:FF:000002">
    <property type="entry name" value="30S ribosomal protein S8e"/>
    <property type="match status" value="1"/>
</dbReference>
<dbReference type="Gene3D" id="2.40.10.310">
    <property type="match status" value="1"/>
</dbReference>
<dbReference type="HAMAP" id="MF_00029">
    <property type="entry name" value="Ribosomal_eS8"/>
    <property type="match status" value="1"/>
</dbReference>
<dbReference type="InterPro" id="IPR001047">
    <property type="entry name" value="Ribosomal_eS8"/>
</dbReference>
<dbReference type="InterPro" id="IPR018283">
    <property type="entry name" value="Ribosomal_eS8_CS"/>
</dbReference>
<dbReference type="InterPro" id="IPR020919">
    <property type="entry name" value="Ribosomal_protein_eS8_arc"/>
</dbReference>
<dbReference type="InterPro" id="IPR022309">
    <property type="entry name" value="Ribosomal_Se8/biogenesis_NSA2"/>
</dbReference>
<dbReference type="NCBIfam" id="TIGR00307">
    <property type="entry name" value="eS8"/>
    <property type="match status" value="1"/>
</dbReference>
<dbReference type="PANTHER" id="PTHR10394">
    <property type="entry name" value="40S RIBOSOMAL PROTEIN S8"/>
    <property type="match status" value="1"/>
</dbReference>
<dbReference type="Pfam" id="PF01201">
    <property type="entry name" value="Ribosomal_S8e"/>
    <property type="match status" value="1"/>
</dbReference>
<dbReference type="PROSITE" id="PS01193">
    <property type="entry name" value="RIBOSOMAL_S8E"/>
    <property type="match status" value="1"/>
</dbReference>
<organism>
    <name type="scientific">Pyrococcus horikoshii (strain ATCC 700860 / DSM 12428 / JCM 9974 / NBRC 100139 / OT-3)</name>
    <dbReference type="NCBI Taxonomy" id="70601"/>
    <lineage>
        <taxon>Archaea</taxon>
        <taxon>Methanobacteriati</taxon>
        <taxon>Methanobacteriota</taxon>
        <taxon>Thermococci</taxon>
        <taxon>Thermococcales</taxon>
        <taxon>Thermococcaceae</taxon>
        <taxon>Pyrococcus</taxon>
    </lineage>
</organism>
<gene>
    <name type="primary">rps8e</name>
    <name type="ordered locus">PH1103</name>
</gene>
<comment type="subunit">
    <text evidence="1">Part of the 30S ribosomal subunit.</text>
</comment>
<comment type="similarity">
    <text evidence="2">Belongs to the eukaryotic ribosomal protein eS8 family.</text>
</comment>
<sequence>MAIWQGRSLKKPSGGRIVLARKKRKRELGREPSNTRVAEQDKRKIIRTYGGNRKVRLTAAAYANVFDKSGKGRKVRIIRVLENPANRQFARRNIITKGAIIETEIGKAKVTSRPGQDGVVNAILLEE</sequence>
<feature type="chain" id="PRO_0000122277" description="Small ribosomal subunit protein eS8">
    <location>
        <begin position="1"/>
        <end position="127"/>
    </location>
</feature>
<reference key="1">
    <citation type="journal article" date="1998" name="DNA Res.">
        <title>Complete sequence and gene organization of the genome of a hyper-thermophilic archaebacterium, Pyrococcus horikoshii OT3.</title>
        <authorList>
            <person name="Kawarabayasi Y."/>
            <person name="Sawada M."/>
            <person name="Horikawa H."/>
            <person name="Haikawa Y."/>
            <person name="Hino Y."/>
            <person name="Yamamoto S."/>
            <person name="Sekine M."/>
            <person name="Baba S."/>
            <person name="Kosugi H."/>
            <person name="Hosoyama A."/>
            <person name="Nagai Y."/>
            <person name="Sakai M."/>
            <person name="Ogura K."/>
            <person name="Otsuka R."/>
            <person name="Nakazawa H."/>
            <person name="Takamiya M."/>
            <person name="Ohfuku Y."/>
            <person name="Funahashi T."/>
            <person name="Tanaka T."/>
            <person name="Kudoh Y."/>
            <person name="Yamazaki J."/>
            <person name="Kushida N."/>
            <person name="Oguchi A."/>
            <person name="Aoki K."/>
            <person name="Yoshizawa T."/>
            <person name="Nakamura Y."/>
            <person name="Robb F.T."/>
            <person name="Horikoshi K."/>
            <person name="Masuchi Y."/>
            <person name="Shizuya H."/>
            <person name="Kikuchi H."/>
        </authorList>
    </citation>
    <scope>NUCLEOTIDE SEQUENCE [LARGE SCALE GENOMIC DNA]</scope>
    <source>
        <strain>ATCC 700860 / DSM 12428 / JCM 9974 / NBRC 100139 / OT-3</strain>
    </source>
</reference>
<accession>O58830</accession>
<name>RS8E_PYRHO</name>
<keyword id="KW-0687">Ribonucleoprotein</keyword>
<keyword id="KW-0689">Ribosomal protein</keyword>
<protein>
    <recommendedName>
        <fullName evidence="2">Small ribosomal subunit protein eS8</fullName>
    </recommendedName>
    <alternativeName>
        <fullName>30S ribosomal protein S8e</fullName>
    </alternativeName>
</protein>
<evidence type="ECO:0000250" key="1"/>
<evidence type="ECO:0000305" key="2"/>
<proteinExistence type="inferred from homology"/>